<protein>
    <recommendedName>
        <fullName evidence="5">Large ribosomal subunit protein P2</fullName>
    </recommendedName>
    <alternativeName>
        <fullName>60S acidic ribosomal protein P2</fullName>
    </alternativeName>
</protein>
<dbReference type="EMBL" id="X15098">
    <property type="protein sequence ID" value="CAA33201.1"/>
    <property type="molecule type" value="mRNA"/>
</dbReference>
<dbReference type="EMBL" id="X55153">
    <property type="protein sequence ID" value="CAA38953.1"/>
    <property type="molecule type" value="Genomic_DNA"/>
</dbReference>
<dbReference type="EMBL" id="BC099697">
    <property type="protein sequence ID" value="AAH99697.1"/>
    <property type="molecule type" value="mRNA"/>
</dbReference>
<dbReference type="PIR" id="S22320">
    <property type="entry name" value="R6RTP2"/>
</dbReference>
<dbReference type="RefSeq" id="NP_001025192.1">
    <property type="nucleotide sequence ID" value="NM_001030021.1"/>
</dbReference>
<dbReference type="RefSeq" id="XP_003749061.1">
    <property type="nucleotide sequence ID" value="XM_003749013.2"/>
</dbReference>
<dbReference type="RefSeq" id="XP_008772967.1">
    <property type="nucleotide sequence ID" value="XM_008774745.1"/>
</dbReference>
<dbReference type="SMR" id="P02401"/>
<dbReference type="BioGRID" id="250823">
    <property type="interactions" value="5"/>
</dbReference>
<dbReference type="FunCoup" id="P02401">
    <property type="interactions" value="2119"/>
</dbReference>
<dbReference type="IntAct" id="P02401">
    <property type="interactions" value="6"/>
</dbReference>
<dbReference type="STRING" id="10116.ENSRNOP00000038214"/>
<dbReference type="iPTMnet" id="P02401"/>
<dbReference type="PhosphoSitePlus" id="P02401"/>
<dbReference type="jPOST" id="P02401"/>
<dbReference type="PaxDb" id="10116-ENSRNOP00000038214"/>
<dbReference type="Ensembl" id="ENSRNOT00000109157.1">
    <property type="protein sequence ID" value="ENSRNOP00000097047.1"/>
    <property type="gene ID" value="ENSRNOG00000068445.1"/>
</dbReference>
<dbReference type="GeneID" id="140662"/>
<dbReference type="KEGG" id="rno:140662"/>
<dbReference type="UCSC" id="RGD:621775">
    <property type="organism name" value="rat"/>
</dbReference>
<dbReference type="AGR" id="RGD:621775"/>
<dbReference type="CTD" id="6181"/>
<dbReference type="RGD" id="621775">
    <property type="gene designation" value="Rplp2"/>
</dbReference>
<dbReference type="eggNOG" id="KOG3449">
    <property type="taxonomic scope" value="Eukaryota"/>
</dbReference>
<dbReference type="GeneTree" id="ENSGT00550000074828"/>
<dbReference type="HOGENOM" id="CLU_114656_0_2_1"/>
<dbReference type="InParanoid" id="P02401"/>
<dbReference type="OMA" id="DIMAQGI"/>
<dbReference type="OrthoDB" id="1227494at2759"/>
<dbReference type="PhylomeDB" id="P02401"/>
<dbReference type="TreeFam" id="TF320650"/>
<dbReference type="Reactome" id="R-RNO-156827">
    <property type="pathway name" value="L13a-mediated translational silencing of Ceruloplasmin expression"/>
</dbReference>
<dbReference type="Reactome" id="R-RNO-1799339">
    <property type="pathway name" value="SRP-dependent cotranslational protein targeting to membrane"/>
</dbReference>
<dbReference type="Reactome" id="R-RNO-6791226">
    <property type="pathway name" value="Major pathway of rRNA processing in the nucleolus and cytosol"/>
</dbReference>
<dbReference type="Reactome" id="R-RNO-72689">
    <property type="pathway name" value="Formation of a pool of free 40S subunits"/>
</dbReference>
<dbReference type="Reactome" id="R-RNO-72706">
    <property type="pathway name" value="GTP hydrolysis and joining of the 60S ribosomal subunit"/>
</dbReference>
<dbReference type="Reactome" id="R-RNO-975956">
    <property type="pathway name" value="Nonsense Mediated Decay (NMD) independent of the Exon Junction Complex (EJC)"/>
</dbReference>
<dbReference type="Reactome" id="R-RNO-975957">
    <property type="pathway name" value="Nonsense Mediated Decay (NMD) enhanced by the Exon Junction Complex (EJC)"/>
</dbReference>
<dbReference type="PRO" id="PR:P02401"/>
<dbReference type="Proteomes" id="UP000002494">
    <property type="component" value="Chromosome 1"/>
</dbReference>
<dbReference type="Bgee" id="ENSRNOG00000002116">
    <property type="expression patterns" value="Expressed in ovary and 19 other cell types or tissues"/>
</dbReference>
<dbReference type="GO" id="GO:0005737">
    <property type="term" value="C:cytoplasm"/>
    <property type="evidence" value="ECO:0000266"/>
    <property type="project" value="RGD"/>
</dbReference>
<dbReference type="GO" id="GO:0022625">
    <property type="term" value="C:cytosolic large ribosomal subunit"/>
    <property type="evidence" value="ECO:0000314"/>
    <property type="project" value="RGD"/>
</dbReference>
<dbReference type="GO" id="GO:0045202">
    <property type="term" value="C:synapse"/>
    <property type="evidence" value="ECO:0000266"/>
    <property type="project" value="RGD"/>
</dbReference>
<dbReference type="GO" id="GO:0005506">
    <property type="term" value="F:iron ion binding"/>
    <property type="evidence" value="ECO:0000314"/>
    <property type="project" value="RGD"/>
</dbReference>
<dbReference type="GO" id="GO:0043021">
    <property type="term" value="F:ribonucleoprotein complex binding"/>
    <property type="evidence" value="ECO:0000353"/>
    <property type="project" value="RGD"/>
</dbReference>
<dbReference type="GO" id="GO:0003735">
    <property type="term" value="F:structural constituent of ribosome"/>
    <property type="evidence" value="ECO:0000266"/>
    <property type="project" value="RGD"/>
</dbReference>
<dbReference type="GO" id="GO:0071320">
    <property type="term" value="P:cellular response to cAMP"/>
    <property type="evidence" value="ECO:0000270"/>
    <property type="project" value="RGD"/>
</dbReference>
<dbReference type="GO" id="GO:1904401">
    <property type="term" value="P:cellular response to Thyroid stimulating hormone"/>
    <property type="evidence" value="ECO:0000270"/>
    <property type="project" value="RGD"/>
</dbReference>
<dbReference type="GO" id="GO:0002182">
    <property type="term" value="P:cytoplasmic translational elongation"/>
    <property type="evidence" value="ECO:0007669"/>
    <property type="project" value="InterPro"/>
</dbReference>
<dbReference type="GO" id="GO:0045727">
    <property type="term" value="P:positive regulation of translation"/>
    <property type="evidence" value="ECO:0000314"/>
    <property type="project" value="RGD"/>
</dbReference>
<dbReference type="CDD" id="cd05833">
    <property type="entry name" value="Ribosomal_P2"/>
    <property type="match status" value="1"/>
</dbReference>
<dbReference type="FunFam" id="1.10.10.1410:FF:000002">
    <property type="entry name" value="60S acidic ribosomal protein P2"/>
    <property type="match status" value="1"/>
</dbReference>
<dbReference type="Gene3D" id="1.10.10.1410">
    <property type="match status" value="1"/>
</dbReference>
<dbReference type="HAMAP" id="MF_01478">
    <property type="entry name" value="Ribosomal_L12_arch"/>
    <property type="match status" value="1"/>
</dbReference>
<dbReference type="InterPro" id="IPR038716">
    <property type="entry name" value="P1/P2_N_sf"/>
</dbReference>
<dbReference type="InterPro" id="IPR027534">
    <property type="entry name" value="Ribosomal_P1/P2"/>
</dbReference>
<dbReference type="InterPro" id="IPR044076">
    <property type="entry name" value="Ribosomal_P2"/>
</dbReference>
<dbReference type="PANTHER" id="PTHR21141">
    <property type="entry name" value="60S ACIDIC RIBOSOMAL PROTEIN FAMILY MEMBER"/>
    <property type="match status" value="1"/>
</dbReference>
<dbReference type="PANTHER" id="PTHR21141:SF5">
    <property type="entry name" value="LARGE RIBOSOMAL SUBUNIT PROTEIN P2"/>
    <property type="match status" value="1"/>
</dbReference>
<dbReference type="Pfam" id="PF00428">
    <property type="entry name" value="Ribosomal_60s"/>
    <property type="match status" value="1"/>
</dbReference>
<comment type="function">
    <text>Plays an important role in the elongation step of protein synthesis.</text>
</comment>
<comment type="subunit">
    <text evidence="1">Heterodimer with RPLP1 at the lateral ribosomal stalk of the large ribosomal subunit.</text>
</comment>
<comment type="similarity">
    <text evidence="5">Belongs to the eukaryotic ribosomal protein P1/P2 family.</text>
</comment>
<keyword id="KW-0007">Acetylation</keyword>
<keyword id="KW-0903">Direct protein sequencing</keyword>
<keyword id="KW-0597">Phosphoprotein</keyword>
<keyword id="KW-1185">Reference proteome</keyword>
<keyword id="KW-0687">Ribonucleoprotein</keyword>
<keyword id="KW-0689">Ribosomal protein</keyword>
<name>RLA2_RAT</name>
<sequence length="115" mass="11692">MRYVASYLLAALGGNSNPSAKDIKKILDSVGIEADDERLNKVISELNGKNIEDVIAQGVGKLASVPAGGAVAVSAAPGSAAPAAGSAPAAAEEKKDEKKEESEESDDDMGFGLFD</sequence>
<evidence type="ECO:0000250" key="1"/>
<evidence type="ECO:0000250" key="2">
    <source>
        <dbReference type="UniProtKB" id="P05387"/>
    </source>
</evidence>
<evidence type="ECO:0000250" key="3">
    <source>
        <dbReference type="UniProtKB" id="P99027"/>
    </source>
</evidence>
<evidence type="ECO:0000256" key="4">
    <source>
        <dbReference type="SAM" id="MobiDB-lite"/>
    </source>
</evidence>
<evidence type="ECO:0000305" key="5"/>
<evidence type="ECO:0007744" key="6">
    <source>
    </source>
</evidence>
<evidence type="ECO:0007744" key="7">
    <source>
    </source>
</evidence>
<reference key="1">
    <citation type="journal article" date="1991" name="Biochimie">
        <title>The primary structure of rat ribosomal proteins P0, P1, and P2 and a proposal for a uniform nomenclature for mammalian and yeast ribosomal proteins.</title>
        <authorList>
            <person name="Wool I.G."/>
            <person name="Chan Y.-L."/>
            <person name="Glueck A."/>
            <person name="Suzuki K."/>
        </authorList>
    </citation>
    <scope>NUCLEOTIDE SEQUENCE [MRNA]</scope>
    <source>
        <strain>Sprague-Dawley</strain>
        <tissue>Liver</tissue>
    </source>
</reference>
<reference key="2">
    <citation type="journal article" date="1991" name="Nucleic Acids Res.">
        <title>The structure of a gene containing introns and encoding rat ribosomal protein P2.</title>
        <authorList>
            <person name="Chan Y.-L."/>
            <person name="Wool I.G."/>
        </authorList>
    </citation>
    <scope>NUCLEOTIDE SEQUENCE [GENOMIC DNA]</scope>
    <source>
        <strain>Sprague-Dawley</strain>
    </source>
</reference>
<reference key="3">
    <citation type="journal article" date="2004" name="Genome Res.">
        <title>The status, quality, and expansion of the NIH full-length cDNA project: the Mammalian Gene Collection (MGC).</title>
        <authorList>
            <consortium name="The MGC Project Team"/>
        </authorList>
    </citation>
    <scope>NUCLEOTIDE SEQUENCE [LARGE SCALE MRNA]</scope>
    <source>
        <tissue>Prostate</tissue>
    </source>
</reference>
<reference key="4">
    <citation type="journal article" date="1982" name="J. Biol. Chem.">
        <title>The primary structure of the acidic phosphoprotein P2 from rat liver 60 S ribosomal subunits. Comparison with ribosomal 'A' proteins from other species.</title>
        <authorList>
            <person name="Lin A."/>
            <person name="Wittmann-Liebold B."/>
            <person name="McNally J."/>
            <person name="Wool I.G."/>
        </authorList>
    </citation>
    <scope>PRELIMINARY PROTEIN SEQUENCE</scope>
    <source>
        <tissue>Liver</tissue>
    </source>
</reference>
<reference key="5">
    <citation type="submission" date="2007-04" db="UniProtKB">
        <authorList>
            <person name="Lubec G."/>
            <person name="Chen W.-Q."/>
        </authorList>
    </citation>
    <scope>PROTEIN SEQUENCE OF 3-21</scope>
    <scope>IDENTIFICATION BY MASS SPECTROMETRY</scope>
    <source>
        <strain>Sprague-Dawley</strain>
        <tissue>Hippocampus</tissue>
    </source>
</reference>
<reference key="6">
    <citation type="journal article" date="2006" name="Proc. Natl. Acad. Sci. U.S.A.">
        <title>Quantitative phosphoproteomics of vasopressin-sensitive renal cells: regulation of aquaporin-2 phosphorylation at two sites.</title>
        <authorList>
            <person name="Hoffert J.D."/>
            <person name="Pisitkun T."/>
            <person name="Wang G."/>
            <person name="Shen R.-F."/>
            <person name="Knepper M.A."/>
        </authorList>
    </citation>
    <scope>PHOSPHORYLATION [LARGE SCALE ANALYSIS] AT SER-102 AND SER-105</scope>
    <scope>IDENTIFICATION BY MASS SPECTROMETRY [LARGE SCALE ANALYSIS]</scope>
</reference>
<reference key="7">
    <citation type="journal article" date="2012" name="Nat. Commun.">
        <title>Quantitative maps of protein phosphorylation sites across 14 different rat organs and tissues.</title>
        <authorList>
            <person name="Lundby A."/>
            <person name="Secher A."/>
            <person name="Lage K."/>
            <person name="Nordsborg N.B."/>
            <person name="Dmytriyev A."/>
            <person name="Lundby C."/>
            <person name="Olsen J.V."/>
        </authorList>
    </citation>
    <scope>PHOSPHORYLATION [LARGE SCALE ANALYSIS] AT SER-102 AND SER-105</scope>
    <scope>IDENTIFICATION BY MASS SPECTROMETRY [LARGE SCALE ANALYSIS]</scope>
</reference>
<proteinExistence type="evidence at protein level"/>
<organism>
    <name type="scientific">Rattus norvegicus</name>
    <name type="common">Rat</name>
    <dbReference type="NCBI Taxonomy" id="10116"/>
    <lineage>
        <taxon>Eukaryota</taxon>
        <taxon>Metazoa</taxon>
        <taxon>Chordata</taxon>
        <taxon>Craniata</taxon>
        <taxon>Vertebrata</taxon>
        <taxon>Euteleostomi</taxon>
        <taxon>Mammalia</taxon>
        <taxon>Eutheria</taxon>
        <taxon>Euarchontoglires</taxon>
        <taxon>Glires</taxon>
        <taxon>Rodentia</taxon>
        <taxon>Myomorpha</taxon>
        <taxon>Muroidea</taxon>
        <taxon>Muridae</taxon>
        <taxon>Murinae</taxon>
        <taxon>Rattus</taxon>
    </lineage>
</organism>
<accession>P02401</accession>
<accession>Q499W9</accession>
<gene>
    <name type="primary">Rplp2</name>
    <name type="synonym">Rp2</name>
</gene>
<feature type="chain" id="PRO_0000157644" description="Large ribosomal subunit protein P2">
    <location>
        <begin position="1"/>
        <end position="115"/>
    </location>
</feature>
<feature type="region of interest" description="Disordered" evidence="4">
    <location>
        <begin position="76"/>
        <end position="115"/>
    </location>
</feature>
<feature type="compositionally biased region" description="Low complexity" evidence="4">
    <location>
        <begin position="76"/>
        <end position="90"/>
    </location>
</feature>
<feature type="compositionally biased region" description="Basic and acidic residues" evidence="4">
    <location>
        <begin position="91"/>
        <end position="101"/>
    </location>
</feature>
<feature type="modified residue" description="N-acetylmethionine" evidence="2">
    <location>
        <position position="1"/>
    </location>
</feature>
<feature type="modified residue" description="Phosphoserine" evidence="2">
    <location>
        <position position="19"/>
    </location>
</feature>
<feature type="modified residue" description="N6-acetyllysine; alternate" evidence="2">
    <location>
        <position position="21"/>
    </location>
</feature>
<feature type="modified residue" description="N6-succinyllysine; alternate" evidence="3">
    <location>
        <position position="21"/>
    </location>
</feature>
<feature type="modified residue" description="Phosphoserine" evidence="2">
    <location>
        <position position="79"/>
    </location>
</feature>
<feature type="modified residue" description="Phosphoserine" evidence="2">
    <location>
        <position position="86"/>
    </location>
</feature>
<feature type="modified residue" description="Phosphoserine" evidence="6 7">
    <location>
        <position position="102"/>
    </location>
</feature>
<feature type="modified residue" description="Phosphoserine" evidence="6 7">
    <location>
        <position position="105"/>
    </location>
</feature>